<reference key="1">
    <citation type="journal article" date="2006" name="PLoS Genet.">
        <title>The complete genome sequence and comparative genome analysis of the high pathogenicity Yersinia enterocolitica strain 8081.</title>
        <authorList>
            <person name="Thomson N.R."/>
            <person name="Howard S."/>
            <person name="Wren B.W."/>
            <person name="Holden M.T.G."/>
            <person name="Crossman L."/>
            <person name="Challis G.L."/>
            <person name="Churcher C."/>
            <person name="Mungall K."/>
            <person name="Brooks K."/>
            <person name="Chillingworth T."/>
            <person name="Feltwell T."/>
            <person name="Abdellah Z."/>
            <person name="Hauser H."/>
            <person name="Jagels K."/>
            <person name="Maddison M."/>
            <person name="Moule S."/>
            <person name="Sanders M."/>
            <person name="Whitehead S."/>
            <person name="Quail M.A."/>
            <person name="Dougan G."/>
            <person name="Parkhill J."/>
            <person name="Prentice M.B."/>
        </authorList>
    </citation>
    <scope>NUCLEOTIDE SEQUENCE [LARGE SCALE GENOMIC DNA]</scope>
    <source>
        <strain>NCTC 13174 / 8081</strain>
    </source>
</reference>
<sequence length="266" mass="29662">MRLIPLKNTTEVGKWAARYIVNRINAFKPTADRPFVLGLPTGGTPMEAYKHLVALYKAGEVSFKNVVTFNMDEYVGLPQEHPESYYTFMHSNFFDHVDIPAENINLLNGNAPDIDEECRRYEEKIKSYGKIHLFMGGVGVDGHIAFNEPASSLASRTRIKTLTEETREANSRFFGGDANLVPKYALTVGVGTLLDAEEVMILVTGRGKAQALQAAVEGSINHMWTISCLQLHAKAIMVCDEPSTMELKVKTVKYFSELEAENIKNL</sequence>
<proteinExistence type="inferred from homology"/>
<feature type="chain" id="PRO_1000067036" description="Glucosamine-6-phosphate deaminase">
    <location>
        <begin position="1"/>
        <end position="266"/>
    </location>
</feature>
<feature type="active site" description="Proton acceptor; for enolization step" evidence="1">
    <location>
        <position position="72"/>
    </location>
</feature>
<feature type="active site" description="For ring-opening step" evidence="1">
    <location>
        <position position="141"/>
    </location>
</feature>
<feature type="active site" description="Proton acceptor; for ring-opening step" evidence="1">
    <location>
        <position position="143"/>
    </location>
</feature>
<feature type="active site" description="For ring-opening step" evidence="1">
    <location>
        <position position="148"/>
    </location>
</feature>
<feature type="site" description="Part of the allosteric site" evidence="1">
    <location>
        <position position="151"/>
    </location>
</feature>
<feature type="site" description="Part of the allosteric site" evidence="1">
    <location>
        <position position="158"/>
    </location>
</feature>
<feature type="site" description="Part of the allosteric site" evidence="1">
    <location>
        <position position="160"/>
    </location>
</feature>
<feature type="site" description="Part of the allosteric site" evidence="1">
    <location>
        <position position="161"/>
    </location>
</feature>
<feature type="site" description="Part of the allosteric site" evidence="1">
    <location>
        <position position="254"/>
    </location>
</feature>
<protein>
    <recommendedName>
        <fullName evidence="1">Glucosamine-6-phosphate deaminase</fullName>
        <ecNumber evidence="1">3.5.99.6</ecNumber>
    </recommendedName>
    <alternativeName>
        <fullName evidence="1">GlcN6P deaminase</fullName>
        <shortName evidence="1">GNPDA</shortName>
    </alternativeName>
    <alternativeName>
        <fullName evidence="1">Glucosamine-6-phosphate isomerase</fullName>
    </alternativeName>
</protein>
<dbReference type="EC" id="3.5.99.6" evidence="1"/>
<dbReference type="EMBL" id="AM286415">
    <property type="protein sequence ID" value="CAL13018.1"/>
    <property type="molecule type" value="Genomic_DNA"/>
</dbReference>
<dbReference type="RefSeq" id="WP_005163359.1">
    <property type="nucleotide sequence ID" value="NC_008800.1"/>
</dbReference>
<dbReference type="RefSeq" id="YP_001007168.1">
    <property type="nucleotide sequence ID" value="NC_008800.1"/>
</dbReference>
<dbReference type="SMR" id="A1JQE8"/>
<dbReference type="GeneID" id="93971582"/>
<dbReference type="KEGG" id="yen:YE2979"/>
<dbReference type="PATRIC" id="fig|393305.7.peg.3171"/>
<dbReference type="eggNOG" id="COG0363">
    <property type="taxonomic scope" value="Bacteria"/>
</dbReference>
<dbReference type="HOGENOM" id="CLU_049611_0_1_6"/>
<dbReference type="OrthoDB" id="9791139at2"/>
<dbReference type="UniPathway" id="UPA00629">
    <property type="reaction ID" value="UER00684"/>
</dbReference>
<dbReference type="Proteomes" id="UP000000642">
    <property type="component" value="Chromosome"/>
</dbReference>
<dbReference type="GO" id="GO:0005737">
    <property type="term" value="C:cytoplasm"/>
    <property type="evidence" value="ECO:0007669"/>
    <property type="project" value="TreeGrafter"/>
</dbReference>
<dbReference type="GO" id="GO:0004342">
    <property type="term" value="F:glucosamine-6-phosphate deaminase activity"/>
    <property type="evidence" value="ECO:0007669"/>
    <property type="project" value="UniProtKB-UniRule"/>
</dbReference>
<dbReference type="GO" id="GO:0042802">
    <property type="term" value="F:identical protein binding"/>
    <property type="evidence" value="ECO:0007669"/>
    <property type="project" value="TreeGrafter"/>
</dbReference>
<dbReference type="GO" id="GO:0005975">
    <property type="term" value="P:carbohydrate metabolic process"/>
    <property type="evidence" value="ECO:0007669"/>
    <property type="project" value="InterPro"/>
</dbReference>
<dbReference type="GO" id="GO:0006043">
    <property type="term" value="P:glucosamine catabolic process"/>
    <property type="evidence" value="ECO:0007669"/>
    <property type="project" value="TreeGrafter"/>
</dbReference>
<dbReference type="GO" id="GO:0006046">
    <property type="term" value="P:N-acetylglucosamine catabolic process"/>
    <property type="evidence" value="ECO:0007669"/>
    <property type="project" value="TreeGrafter"/>
</dbReference>
<dbReference type="GO" id="GO:0019262">
    <property type="term" value="P:N-acetylneuraminate catabolic process"/>
    <property type="evidence" value="ECO:0007669"/>
    <property type="project" value="UniProtKB-UniRule"/>
</dbReference>
<dbReference type="CDD" id="cd01399">
    <property type="entry name" value="GlcN6P_deaminase"/>
    <property type="match status" value="1"/>
</dbReference>
<dbReference type="FunFam" id="3.40.50.1360:FF:000002">
    <property type="entry name" value="Glucosamine-6-phosphate deaminase"/>
    <property type="match status" value="1"/>
</dbReference>
<dbReference type="Gene3D" id="3.40.50.1360">
    <property type="match status" value="1"/>
</dbReference>
<dbReference type="HAMAP" id="MF_01241">
    <property type="entry name" value="GlcN6P_deamin"/>
    <property type="match status" value="1"/>
</dbReference>
<dbReference type="InterPro" id="IPR006148">
    <property type="entry name" value="Glc/Gal-6P_isomerase"/>
</dbReference>
<dbReference type="InterPro" id="IPR004547">
    <property type="entry name" value="Glucosamine6P_isomerase"/>
</dbReference>
<dbReference type="InterPro" id="IPR018321">
    <property type="entry name" value="Glucosamine6P_isomerase_CS"/>
</dbReference>
<dbReference type="InterPro" id="IPR037171">
    <property type="entry name" value="NagB/RpiA_transferase-like"/>
</dbReference>
<dbReference type="NCBIfam" id="TIGR00502">
    <property type="entry name" value="nagB"/>
    <property type="match status" value="1"/>
</dbReference>
<dbReference type="NCBIfam" id="NF001685">
    <property type="entry name" value="PRK00443.1-5"/>
    <property type="match status" value="1"/>
</dbReference>
<dbReference type="PANTHER" id="PTHR11280">
    <property type="entry name" value="GLUCOSAMINE-6-PHOSPHATE ISOMERASE"/>
    <property type="match status" value="1"/>
</dbReference>
<dbReference type="PANTHER" id="PTHR11280:SF5">
    <property type="entry name" value="GLUCOSAMINE-6-PHOSPHATE ISOMERASE"/>
    <property type="match status" value="1"/>
</dbReference>
<dbReference type="Pfam" id="PF01182">
    <property type="entry name" value="Glucosamine_iso"/>
    <property type="match status" value="1"/>
</dbReference>
<dbReference type="SUPFAM" id="SSF100950">
    <property type="entry name" value="NagB/RpiA/CoA transferase-like"/>
    <property type="match status" value="1"/>
</dbReference>
<dbReference type="PROSITE" id="PS01161">
    <property type="entry name" value="GLC_GALNAC_ISOMERASE"/>
    <property type="match status" value="1"/>
</dbReference>
<keyword id="KW-0021">Allosteric enzyme</keyword>
<keyword id="KW-0119">Carbohydrate metabolism</keyword>
<keyword id="KW-0378">Hydrolase</keyword>
<evidence type="ECO:0000255" key="1">
    <source>
        <dbReference type="HAMAP-Rule" id="MF_01241"/>
    </source>
</evidence>
<comment type="function">
    <text evidence="1">Catalyzes the reversible isomerization-deamination of glucosamine 6-phosphate (GlcN6P) to form fructose 6-phosphate (Fru6P) and ammonium ion.</text>
</comment>
<comment type="catalytic activity">
    <reaction evidence="1">
        <text>alpha-D-glucosamine 6-phosphate + H2O = beta-D-fructose 6-phosphate + NH4(+)</text>
        <dbReference type="Rhea" id="RHEA:12172"/>
        <dbReference type="ChEBI" id="CHEBI:15377"/>
        <dbReference type="ChEBI" id="CHEBI:28938"/>
        <dbReference type="ChEBI" id="CHEBI:57634"/>
        <dbReference type="ChEBI" id="CHEBI:75989"/>
        <dbReference type="EC" id="3.5.99.6"/>
    </reaction>
</comment>
<comment type="activity regulation">
    <text evidence="1">Allosterically activated by N-acetylglucosamine 6-phosphate (GlcNAc6P).</text>
</comment>
<comment type="pathway">
    <text evidence="1">Amino-sugar metabolism; N-acetylneuraminate degradation; D-fructose 6-phosphate from N-acetylneuraminate: step 5/5.</text>
</comment>
<comment type="subunit">
    <text evidence="1">Homohexamer.</text>
</comment>
<comment type="similarity">
    <text evidence="1">Belongs to the glucosamine/galactosamine-6-phosphate isomerase family. NagB subfamily.</text>
</comment>
<organism>
    <name type="scientific">Yersinia enterocolitica serotype O:8 / biotype 1B (strain NCTC 13174 / 8081)</name>
    <dbReference type="NCBI Taxonomy" id="393305"/>
    <lineage>
        <taxon>Bacteria</taxon>
        <taxon>Pseudomonadati</taxon>
        <taxon>Pseudomonadota</taxon>
        <taxon>Gammaproteobacteria</taxon>
        <taxon>Enterobacterales</taxon>
        <taxon>Yersiniaceae</taxon>
        <taxon>Yersinia</taxon>
    </lineage>
</organism>
<name>NAGB_YERE8</name>
<gene>
    <name evidence="1" type="primary">nagB</name>
    <name type="ordered locus">YE2979</name>
</gene>
<accession>A1JQE8</accession>